<accession>C0PY12</accession>
<comment type="catalytic activity">
    <reaction evidence="1">
        <text>tRNA(Lys) + L-lysine + ATP = L-lysyl-tRNA(Lys) + AMP + diphosphate</text>
        <dbReference type="Rhea" id="RHEA:20792"/>
        <dbReference type="Rhea" id="RHEA-COMP:9696"/>
        <dbReference type="Rhea" id="RHEA-COMP:9697"/>
        <dbReference type="ChEBI" id="CHEBI:30616"/>
        <dbReference type="ChEBI" id="CHEBI:32551"/>
        <dbReference type="ChEBI" id="CHEBI:33019"/>
        <dbReference type="ChEBI" id="CHEBI:78442"/>
        <dbReference type="ChEBI" id="CHEBI:78529"/>
        <dbReference type="ChEBI" id="CHEBI:456215"/>
        <dbReference type="EC" id="6.1.1.6"/>
    </reaction>
</comment>
<comment type="cofactor">
    <cofactor evidence="1">
        <name>Mg(2+)</name>
        <dbReference type="ChEBI" id="CHEBI:18420"/>
    </cofactor>
    <text evidence="1">Binds 3 Mg(2+) ions per subunit.</text>
</comment>
<comment type="subunit">
    <text evidence="1">Homodimer.</text>
</comment>
<comment type="subcellular location">
    <subcellularLocation>
        <location evidence="1">Cytoplasm</location>
    </subcellularLocation>
</comment>
<comment type="similarity">
    <text evidence="1">Belongs to the class-II aminoacyl-tRNA synthetase family.</text>
</comment>
<evidence type="ECO:0000255" key="1">
    <source>
        <dbReference type="HAMAP-Rule" id="MF_00252"/>
    </source>
</evidence>
<feature type="chain" id="PRO_1000125524" description="Lysine--tRNA ligase">
    <location>
        <begin position="1"/>
        <end position="505"/>
    </location>
</feature>
<feature type="binding site" evidence="1">
    <location>
        <position position="415"/>
    </location>
    <ligand>
        <name>Mg(2+)</name>
        <dbReference type="ChEBI" id="CHEBI:18420"/>
        <label>1</label>
    </ligand>
</feature>
<feature type="binding site" evidence="1">
    <location>
        <position position="422"/>
    </location>
    <ligand>
        <name>Mg(2+)</name>
        <dbReference type="ChEBI" id="CHEBI:18420"/>
        <label>1</label>
    </ligand>
</feature>
<feature type="binding site" evidence="1">
    <location>
        <position position="422"/>
    </location>
    <ligand>
        <name>Mg(2+)</name>
        <dbReference type="ChEBI" id="CHEBI:18420"/>
        <label>2</label>
    </ligand>
</feature>
<sequence length="505" mass="57503">MSEQNAQGADEVVDLNNEMKARREKLAALREQGIPFPNDFRRDRTSDQLHAEFDAKEAEELEALNIEVSVAGRMMTRRIMGKASFVTLQDVGGRIQLYVARDDLPEGVYNEQFKKWDLGDILGAKGKLFKTKTGELSIHCTELRLLTKALRPLPDKFHGLQDQEARYRQRYLDLISNDESRNTFKTRSKILAGIRQFMVARGFMEVETPMMQVIPGGASARPFITHHNALDLDMYLRIAPELYLKRLVVGGFERVFEINRNFRNEGISVRHNPEFTMMELYMAYADYKDLIELTESLFRTLAQDVLGTTQVPYGDEVFDFGKPFEKLTMREAIKKYRPETDMADLGNFDSAKAVAESIGIHVEKSWGLGRIVTEIFDEVAEAHLIQPTFITEYPAEVSPLARRNDVNPEITDRFEFFIGGREIGNGFSELNDAEDQAQRFLDQVNAKAAGDDEAMFYDEDYVTALEHGLPPTAGLGIGIDRMVMLFTNSHTIRDVILFPAMRPVK</sequence>
<dbReference type="EC" id="6.1.1.6" evidence="1"/>
<dbReference type="EMBL" id="CP000857">
    <property type="protein sequence ID" value="ACN47186.1"/>
    <property type="molecule type" value="Genomic_DNA"/>
</dbReference>
<dbReference type="RefSeq" id="WP_000003341.1">
    <property type="nucleotide sequence ID" value="NC_012125.1"/>
</dbReference>
<dbReference type="SMR" id="C0PY12"/>
<dbReference type="KEGG" id="sei:SPC_3099"/>
<dbReference type="HOGENOM" id="CLU_008255_6_0_6"/>
<dbReference type="Proteomes" id="UP000001599">
    <property type="component" value="Chromosome"/>
</dbReference>
<dbReference type="GO" id="GO:0005829">
    <property type="term" value="C:cytosol"/>
    <property type="evidence" value="ECO:0007669"/>
    <property type="project" value="TreeGrafter"/>
</dbReference>
<dbReference type="GO" id="GO:0005524">
    <property type="term" value="F:ATP binding"/>
    <property type="evidence" value="ECO:0007669"/>
    <property type="project" value="UniProtKB-UniRule"/>
</dbReference>
<dbReference type="GO" id="GO:0004824">
    <property type="term" value="F:lysine-tRNA ligase activity"/>
    <property type="evidence" value="ECO:0007669"/>
    <property type="project" value="UniProtKB-UniRule"/>
</dbReference>
<dbReference type="GO" id="GO:0000287">
    <property type="term" value="F:magnesium ion binding"/>
    <property type="evidence" value="ECO:0007669"/>
    <property type="project" value="UniProtKB-UniRule"/>
</dbReference>
<dbReference type="GO" id="GO:0000049">
    <property type="term" value="F:tRNA binding"/>
    <property type="evidence" value="ECO:0007669"/>
    <property type="project" value="TreeGrafter"/>
</dbReference>
<dbReference type="GO" id="GO:0006430">
    <property type="term" value="P:lysyl-tRNA aminoacylation"/>
    <property type="evidence" value="ECO:0007669"/>
    <property type="project" value="UniProtKB-UniRule"/>
</dbReference>
<dbReference type="CDD" id="cd00775">
    <property type="entry name" value="LysRS_core"/>
    <property type="match status" value="1"/>
</dbReference>
<dbReference type="CDD" id="cd04322">
    <property type="entry name" value="LysRS_N"/>
    <property type="match status" value="1"/>
</dbReference>
<dbReference type="FunFam" id="2.40.50.140:FF:000024">
    <property type="entry name" value="Lysine--tRNA ligase"/>
    <property type="match status" value="1"/>
</dbReference>
<dbReference type="FunFam" id="3.30.930.10:FF:000001">
    <property type="entry name" value="Lysine--tRNA ligase"/>
    <property type="match status" value="1"/>
</dbReference>
<dbReference type="Gene3D" id="3.30.930.10">
    <property type="entry name" value="Bira Bifunctional Protein, Domain 2"/>
    <property type="match status" value="1"/>
</dbReference>
<dbReference type="Gene3D" id="2.40.50.140">
    <property type="entry name" value="Nucleic acid-binding proteins"/>
    <property type="match status" value="1"/>
</dbReference>
<dbReference type="HAMAP" id="MF_00252">
    <property type="entry name" value="Lys_tRNA_synth_class2"/>
    <property type="match status" value="1"/>
</dbReference>
<dbReference type="InterPro" id="IPR004364">
    <property type="entry name" value="Aa-tRNA-synt_II"/>
</dbReference>
<dbReference type="InterPro" id="IPR006195">
    <property type="entry name" value="aa-tRNA-synth_II"/>
</dbReference>
<dbReference type="InterPro" id="IPR045864">
    <property type="entry name" value="aa-tRNA-synth_II/BPL/LPL"/>
</dbReference>
<dbReference type="InterPro" id="IPR002313">
    <property type="entry name" value="Lys-tRNA-ligase_II"/>
</dbReference>
<dbReference type="InterPro" id="IPR034762">
    <property type="entry name" value="Lys-tRNA-ligase_II_bac/euk"/>
</dbReference>
<dbReference type="InterPro" id="IPR044136">
    <property type="entry name" value="Lys-tRNA-ligase_II_N"/>
</dbReference>
<dbReference type="InterPro" id="IPR018149">
    <property type="entry name" value="Lys-tRNA-synth_II_C"/>
</dbReference>
<dbReference type="InterPro" id="IPR012340">
    <property type="entry name" value="NA-bd_OB-fold"/>
</dbReference>
<dbReference type="InterPro" id="IPR004365">
    <property type="entry name" value="NA-bd_OB_tRNA"/>
</dbReference>
<dbReference type="NCBIfam" id="TIGR00499">
    <property type="entry name" value="lysS_bact"/>
    <property type="match status" value="1"/>
</dbReference>
<dbReference type="NCBIfam" id="NF001756">
    <property type="entry name" value="PRK00484.1"/>
    <property type="match status" value="1"/>
</dbReference>
<dbReference type="NCBIfam" id="NF009101">
    <property type="entry name" value="PRK12445.1"/>
    <property type="match status" value="1"/>
</dbReference>
<dbReference type="PANTHER" id="PTHR42918:SF15">
    <property type="entry name" value="LYSINE--TRNA LIGASE, CHLOROPLASTIC_MITOCHONDRIAL"/>
    <property type="match status" value="1"/>
</dbReference>
<dbReference type="PANTHER" id="PTHR42918">
    <property type="entry name" value="LYSYL-TRNA SYNTHETASE"/>
    <property type="match status" value="1"/>
</dbReference>
<dbReference type="Pfam" id="PF00152">
    <property type="entry name" value="tRNA-synt_2"/>
    <property type="match status" value="1"/>
</dbReference>
<dbReference type="Pfam" id="PF01336">
    <property type="entry name" value="tRNA_anti-codon"/>
    <property type="match status" value="1"/>
</dbReference>
<dbReference type="PIRSF" id="PIRSF039101">
    <property type="entry name" value="LysRS2"/>
    <property type="match status" value="1"/>
</dbReference>
<dbReference type="PRINTS" id="PR00982">
    <property type="entry name" value="TRNASYNTHLYS"/>
</dbReference>
<dbReference type="SUPFAM" id="SSF55681">
    <property type="entry name" value="Class II aaRS and biotin synthetases"/>
    <property type="match status" value="1"/>
</dbReference>
<dbReference type="SUPFAM" id="SSF50249">
    <property type="entry name" value="Nucleic acid-binding proteins"/>
    <property type="match status" value="1"/>
</dbReference>
<dbReference type="PROSITE" id="PS50862">
    <property type="entry name" value="AA_TRNA_LIGASE_II"/>
    <property type="match status" value="1"/>
</dbReference>
<gene>
    <name evidence="1" type="primary">lysS</name>
    <name type="ordered locus">SPC_3099</name>
</gene>
<organism>
    <name type="scientific">Salmonella paratyphi C (strain RKS4594)</name>
    <dbReference type="NCBI Taxonomy" id="476213"/>
    <lineage>
        <taxon>Bacteria</taxon>
        <taxon>Pseudomonadati</taxon>
        <taxon>Pseudomonadota</taxon>
        <taxon>Gammaproteobacteria</taxon>
        <taxon>Enterobacterales</taxon>
        <taxon>Enterobacteriaceae</taxon>
        <taxon>Salmonella</taxon>
    </lineage>
</organism>
<proteinExistence type="inferred from homology"/>
<keyword id="KW-0030">Aminoacyl-tRNA synthetase</keyword>
<keyword id="KW-0067">ATP-binding</keyword>
<keyword id="KW-0963">Cytoplasm</keyword>
<keyword id="KW-0436">Ligase</keyword>
<keyword id="KW-0460">Magnesium</keyword>
<keyword id="KW-0479">Metal-binding</keyword>
<keyword id="KW-0547">Nucleotide-binding</keyword>
<keyword id="KW-0648">Protein biosynthesis</keyword>
<reference key="1">
    <citation type="journal article" date="2009" name="PLoS ONE">
        <title>Salmonella paratyphi C: genetic divergence from Salmonella choleraesuis and pathogenic convergence with Salmonella typhi.</title>
        <authorList>
            <person name="Liu W.-Q."/>
            <person name="Feng Y."/>
            <person name="Wang Y."/>
            <person name="Zou Q.-H."/>
            <person name="Chen F."/>
            <person name="Guo J.-T."/>
            <person name="Peng Y.-H."/>
            <person name="Jin Y."/>
            <person name="Li Y.-G."/>
            <person name="Hu S.-N."/>
            <person name="Johnston R.N."/>
            <person name="Liu G.-R."/>
            <person name="Liu S.-L."/>
        </authorList>
    </citation>
    <scope>NUCLEOTIDE SEQUENCE [LARGE SCALE GENOMIC DNA]</scope>
    <source>
        <strain>RKS4594</strain>
    </source>
</reference>
<protein>
    <recommendedName>
        <fullName evidence="1">Lysine--tRNA ligase</fullName>
        <ecNumber evidence="1">6.1.1.6</ecNumber>
    </recommendedName>
    <alternativeName>
        <fullName evidence="1">Lysyl-tRNA synthetase</fullName>
        <shortName evidence="1">LysRS</shortName>
    </alternativeName>
</protein>
<name>SYK_SALPC</name>